<proteinExistence type="evidence at protein level"/>
<accession>Q0DEC8</accession>
<accession>B7F2B2</accession>
<accession>O24206</accession>
<accession>Q40739</accession>
<accession>Q5WA90</accession>
<accession>Q7Y044</accession>
<protein>
    <recommendedName>
        <fullName evidence="9">Soluble starch synthase 1, chloroplastic/amyloplastic</fullName>
        <ecNumber evidence="9">2.4.1.21</ecNumber>
    </recommendedName>
    <alternativeName>
        <fullName evidence="7">Starch synthase I</fullName>
    </alternativeName>
</protein>
<organism>
    <name type="scientific">Oryza sativa subsp. japonica</name>
    <name type="common">Rice</name>
    <dbReference type="NCBI Taxonomy" id="39947"/>
    <lineage>
        <taxon>Eukaryota</taxon>
        <taxon>Viridiplantae</taxon>
        <taxon>Streptophyta</taxon>
        <taxon>Embryophyta</taxon>
        <taxon>Tracheophyta</taxon>
        <taxon>Spermatophyta</taxon>
        <taxon>Magnoliopsida</taxon>
        <taxon>Liliopsida</taxon>
        <taxon>Poales</taxon>
        <taxon>Poaceae</taxon>
        <taxon>BOP clade</taxon>
        <taxon>Oryzoideae</taxon>
        <taxon>Oryzeae</taxon>
        <taxon>Oryzinae</taxon>
        <taxon>Oryza</taxon>
        <taxon>Oryza sativa</taxon>
    </lineage>
</organism>
<reference key="1">
    <citation type="journal article" date="1993" name="Plant Physiol.">
        <title>Identification, cDNA cloning, and gene expression of soluble starch synthase in rice (Oryza sativa L.) immature seeds.</title>
        <authorList>
            <person name="Baba T."/>
            <person name="Nishihara M."/>
            <person name="Mizuno K."/>
            <person name="Kawasaki T."/>
            <person name="Shimada H."/>
            <person name="Kobayashi E."/>
            <person name="Ohnishi S."/>
            <person name="Tanaka K."/>
            <person name="Arai Y."/>
        </authorList>
    </citation>
    <scope>NUCLEOTIDE SEQUENCE [MRNA]</scope>
    <scope>PROTEIN SEQUENCE OF 114-131</scope>
    <scope>TISSUE SPECIFICITY</scope>
    <source>
        <tissue>Seed</tissue>
    </source>
</reference>
<reference key="2">
    <citation type="journal article" date="1995" name="Plant Physiol.">
        <title>Structure, organization and chromosomal location of the gene encoding a form of rice soluble starch synthase.</title>
        <authorList>
            <person name="Tanaka K."/>
            <person name="Ohnishi S."/>
            <person name="Kishimoto N."/>
            <person name="Kawasaki T."/>
            <person name="Baba T."/>
        </authorList>
    </citation>
    <scope>NUCLEOTIDE SEQUENCE [GENOMIC DNA]</scope>
</reference>
<reference key="3">
    <citation type="journal article" date="2009" name="Proc. Natl. Acad. Sci. U.S.A.">
        <title>Allelic diversities in rice starch biosynthesis lead to a diverse array of rice eating and cooking qualities.</title>
        <authorList>
            <person name="Tian Z."/>
            <person name="Qian Q."/>
            <person name="Liu Q."/>
            <person name="Yan M."/>
            <person name="Liu X."/>
            <person name="Yan C."/>
            <person name="Liu G."/>
            <person name="Gao Z."/>
            <person name="Tang S."/>
            <person name="Zeng D."/>
            <person name="Wang Y."/>
            <person name="Yu J."/>
            <person name="Gu M."/>
            <person name="Li J."/>
        </authorList>
    </citation>
    <scope>NUCLEOTIDE SEQUENCE [GENOMIC DNA]</scope>
</reference>
<reference key="4">
    <citation type="submission" date="1999-07" db="EMBL/GenBank/DDBJ databases">
        <authorList>
            <person name="Junwang X."/>
            <person name="Zhen Z."/>
        </authorList>
    </citation>
    <scope>NUCLEOTIDE SEQUENCE [MRNA]</scope>
    <source>
        <strain>cv. Nanjing 37</strain>
    </source>
</reference>
<reference key="5">
    <citation type="journal article" date="2005" name="Nature">
        <title>The map-based sequence of the rice genome.</title>
        <authorList>
            <consortium name="International rice genome sequencing project (IRGSP)"/>
        </authorList>
    </citation>
    <scope>NUCLEOTIDE SEQUENCE [LARGE SCALE GENOMIC DNA]</scope>
    <source>
        <strain>cv. Nipponbare</strain>
    </source>
</reference>
<reference key="6">
    <citation type="journal article" date="2008" name="Nucleic Acids Res.">
        <title>The rice annotation project database (RAP-DB): 2008 update.</title>
        <authorList>
            <consortium name="The rice annotation project (RAP)"/>
        </authorList>
    </citation>
    <scope>GENOME REANNOTATION</scope>
    <source>
        <strain>cv. Nipponbare</strain>
    </source>
</reference>
<reference key="7">
    <citation type="journal article" date="2013" name="Rice">
        <title>Improvement of the Oryza sativa Nipponbare reference genome using next generation sequence and optical map data.</title>
        <authorList>
            <person name="Kawahara Y."/>
            <person name="de la Bastide M."/>
            <person name="Hamilton J.P."/>
            <person name="Kanamori H."/>
            <person name="McCombie W.R."/>
            <person name="Ouyang S."/>
            <person name="Schwartz D.C."/>
            <person name="Tanaka T."/>
            <person name="Wu J."/>
            <person name="Zhou S."/>
            <person name="Childs K.L."/>
            <person name="Davidson R.M."/>
            <person name="Lin H."/>
            <person name="Quesada-Ocampo L."/>
            <person name="Vaillancourt B."/>
            <person name="Sakai H."/>
            <person name="Lee S.S."/>
            <person name="Kim J."/>
            <person name="Numa H."/>
            <person name="Itoh T."/>
            <person name="Buell C.R."/>
            <person name="Matsumoto T."/>
        </authorList>
    </citation>
    <scope>GENOME REANNOTATION</scope>
    <source>
        <strain>cv. Nipponbare</strain>
    </source>
</reference>
<reference key="8">
    <citation type="journal article" date="2003" name="Science">
        <title>Collection, mapping, and annotation of over 28,000 cDNA clones from japonica rice.</title>
        <authorList>
            <consortium name="The rice full-length cDNA consortium"/>
        </authorList>
    </citation>
    <scope>NUCLEOTIDE SEQUENCE [LARGE SCALE MRNA]</scope>
    <source>
        <strain>cv. Nipponbare</strain>
    </source>
</reference>
<reference key="9">
    <citation type="journal article" date="2006" name="Plant Physiol.">
        <title>Function and characterization of starch synthase I using mutants in rice.</title>
        <authorList>
            <person name="Fujita N."/>
            <person name="Yoshida M."/>
            <person name="Asakura N."/>
            <person name="Ohdan T."/>
            <person name="Miyao A."/>
            <person name="Hirochika H."/>
            <person name="Nakamura Y."/>
        </authorList>
    </citation>
    <scope>FUNCTION</scope>
    <scope>DISRUPTION PHENOTYPE</scope>
</reference>
<reference key="10">
    <citation type="journal article" date="2011" name="Biomacromolecules">
        <title>Structures of starches from rice mutants deficient in the starch synthase isozyme SSI or SSIIIa.</title>
        <authorList>
            <person name="Hanashiro I."/>
            <person name="Higuchi T."/>
            <person name="Aihara S."/>
            <person name="Nakamura Y."/>
            <person name="Fujita N."/>
        </authorList>
    </citation>
    <scope>FUNCTION</scope>
    <scope>DISRUPTION PHENOTYPE</scope>
</reference>
<reference key="11">
    <citation type="journal article" date="2011" name="J. Exp. Bot.">
        <title>Starch biosynthesis in rice endosperm requires the presence of either starch synthase I or IIIa.</title>
        <authorList>
            <person name="Fujita N."/>
            <person name="Satoh R."/>
            <person name="Hayashi A."/>
            <person name="Kodama M."/>
            <person name="Itoh R."/>
            <person name="Aihara S."/>
            <person name="Nakamura Y."/>
        </authorList>
    </citation>
    <scope>FUNCTION</scope>
</reference>
<sequence length="641" mass="70952">MATAAGMGIGAACLVAPQVRPGRRLRLQRVRRRCVAELSRDGGSAQRPLAPAPLVKQPVLPTFLVPTSTPPAPTQSPAPAPTPPPLPDSGVGEIEPDLEGLTEDSIDKTIFVASEQESEIMDVKEQAQAKVTRSVVFVTGEASPYAKSGGLGDVCGSLPIALALRGHRVMVVMPRYMNGALNKNFANAFYTEKHIKIPCFGGEHEVTFFHEYRDSVDWVFVDHPSYHRPGNLYGDNFGAFGDNQFRYTLLCYAACEAPLILELGGYIYGQKCMFVVNDWHASLVPVLLAAKYRPYGVYRDARSVLVIHNLAHQGVEPASTYPDLGLPPEWYGALEWVFPEWARRHALDKGEAVNFLKGAVVTADRIVTVSQGYSWEVTTAEGGQGLNELLSSRKSVLNGIVNGIDINDWNPSTDKFLPYHYSVDDLSGKAKCKAELQKELGLPIRPDVPLIGFIGRLDYQKGIDLIKLAIPDLMRDNIQFVMLGSGDPGFEGWMRSTESGYRDKFRGWVGFSVPVSHRITAGCDILLMPSRFEPCGLNQLYAMQYGTVPVVHGTGGLRDTVENFNPFAEKGEQGTGWAFSPLTIEKMLWALRMAISTYREHKSSWEGLMKRGMSSDFTWDHAASQYEQIFEWAFMDQPYVM</sequence>
<keyword id="KW-0035">Amyloplast</keyword>
<keyword id="KW-0150">Chloroplast</keyword>
<keyword id="KW-0903">Direct protein sequencing</keyword>
<keyword id="KW-0328">Glycosyltransferase</keyword>
<keyword id="KW-0934">Plastid</keyword>
<keyword id="KW-1185">Reference proteome</keyword>
<keyword id="KW-0750">Starch biosynthesis</keyword>
<keyword id="KW-0808">Transferase</keyword>
<keyword id="KW-0809">Transit peptide</keyword>
<feature type="transit peptide" description="Chloroplast" evidence="6">
    <location>
        <begin position="1"/>
        <end position="113"/>
    </location>
</feature>
<feature type="chain" id="PRO_0000011138" description="Soluble starch synthase 1, chloroplastic/amyloplastic">
    <location>
        <begin position="114"/>
        <end position="641"/>
    </location>
</feature>
<feature type="region of interest" description="Disordered" evidence="2">
    <location>
        <begin position="62"/>
        <end position="96"/>
    </location>
</feature>
<feature type="compositionally biased region" description="Pro residues" evidence="2">
    <location>
        <begin position="68"/>
        <end position="87"/>
    </location>
</feature>
<feature type="binding site" evidence="1">
    <location>
        <position position="147"/>
    </location>
    <ligand>
        <name>ADP-alpha-D-glucose</name>
        <dbReference type="ChEBI" id="CHEBI:57498"/>
    </ligand>
</feature>
<feature type="sequence conflict" description="In Ref. 1; BAA03739." evidence="9" ref="1">
    <original>QR</original>
    <variation>HG</variation>
    <location>
        <begin position="46"/>
        <end position="47"/>
    </location>
</feature>
<gene>
    <name evidence="7" type="primary">SS1</name>
    <name evidence="8" type="synonym">SSS1</name>
    <name evidence="11" type="ordered locus">Os06g0160700</name>
    <name evidence="9" type="ordered locus">LOC_Os06g06560</name>
    <name evidence="10" type="ORF">P0681F10.13</name>
</gene>
<comment type="function">
    <text evidence="3 4 5">Involved in starch synthesis in endosperm amyloplasts (PubMed:16443699, PubMed:21417378, PubMed:21730357). Plays a role in the elongation of amylopectin chains (PubMed:16443699, PubMed:21417378, PubMed:21730357). Synthesizes preferentially amylopectin chains with a degree of polymerization (DP) of 7 to 11 by elongating chains with a DP of 4 to 7 (PubMed:16443699). Generates distincly chains with a DP of 8 to 12 chains from short chains with a DP of 6 to 7 (PubMed:16443699).</text>
</comment>
<comment type="catalytic activity">
    <reaction evidence="9">
        <text>[(1-&gt;4)-alpha-D-glucosyl](n) + ADP-alpha-D-glucose = [(1-&gt;4)-alpha-D-glucosyl](n+1) + ADP + H(+)</text>
        <dbReference type="Rhea" id="RHEA:18189"/>
        <dbReference type="Rhea" id="RHEA-COMP:9584"/>
        <dbReference type="Rhea" id="RHEA-COMP:9587"/>
        <dbReference type="ChEBI" id="CHEBI:15378"/>
        <dbReference type="ChEBI" id="CHEBI:15444"/>
        <dbReference type="ChEBI" id="CHEBI:57498"/>
        <dbReference type="ChEBI" id="CHEBI:456216"/>
        <dbReference type="EC" id="2.4.1.21"/>
    </reaction>
</comment>
<comment type="pathway">
    <text evidence="9">Glycan biosynthesis; starch biosynthesis.</text>
</comment>
<comment type="subcellular location">
    <subcellularLocation>
        <location>Plastid</location>
        <location>Chloroplast</location>
    </subcellularLocation>
    <subcellularLocation>
        <location>Plastid</location>
        <location>Amyloplast</location>
    </subcellularLocation>
    <text evidence="9">Amyloplast or chloroplast, soluble.</text>
</comment>
<comment type="tissue specificity">
    <text evidence="6">Leaves and immature seeds.</text>
</comment>
<comment type="disruption phenotype">
    <text evidence="3 4">Decrease in average length of amylopectin chains (PubMed:21417378). Reduced content of amylopectin chains with a degree of polymerization (DP) of 8 to 12, but increased content of chains with a DP of 6 to 7 and a DP of 16 to 19 (PubMed:16443699).</text>
</comment>
<comment type="miscellaneous">
    <text evidence="9">Three forms of soluble starch synthase were purified: RSS1, RSS2 and RSS3.</text>
</comment>
<comment type="similarity">
    <text evidence="9">Belongs to the glycosyltransferase 1 family. Bacterial/plant glycogen synthase subfamily.</text>
</comment>
<comment type="sequence caution" evidence="9">
    <conflict type="frameshift">
        <sequence resource="EMBL-CDS" id="AAD49850"/>
    </conflict>
</comment>
<comment type="sequence caution" evidence="9">
    <conflict type="frameshift">
        <sequence resource="EMBL-CDS" id="BAA03739"/>
    </conflict>
</comment>
<comment type="sequence caution" evidence="9">
    <conflict type="frameshift">
        <sequence resource="EMBL-CDS" id="BAA07396"/>
    </conflict>
</comment>
<dbReference type="EC" id="2.4.1.21" evidence="9"/>
<dbReference type="EMBL" id="D16202">
    <property type="protein sequence ID" value="BAA03739.1"/>
    <property type="status" value="ALT_FRAME"/>
    <property type="molecule type" value="mRNA"/>
</dbReference>
<dbReference type="EMBL" id="D38221">
    <property type="protein sequence ID" value="BAA07396.1"/>
    <property type="status" value="ALT_FRAME"/>
    <property type="molecule type" value="Genomic_DNA"/>
</dbReference>
<dbReference type="EMBL" id="GQ150941">
    <property type="protein sequence ID" value="ACY56156.1"/>
    <property type="molecule type" value="Genomic_DNA"/>
</dbReference>
<dbReference type="EMBL" id="GQ150946">
    <property type="protein sequence ID" value="ACY56161.1"/>
    <property type="molecule type" value="Genomic_DNA"/>
</dbReference>
<dbReference type="EMBL" id="GQ150942">
    <property type="protein sequence ID" value="ACY56157.1"/>
    <property type="molecule type" value="Genomic_DNA"/>
</dbReference>
<dbReference type="EMBL" id="GQ150943">
    <property type="protein sequence ID" value="ACY56158.1"/>
    <property type="molecule type" value="Genomic_DNA"/>
</dbReference>
<dbReference type="EMBL" id="GQ150944">
    <property type="protein sequence ID" value="ACY56159.1"/>
    <property type="molecule type" value="Genomic_DNA"/>
</dbReference>
<dbReference type="EMBL" id="GQ150945">
    <property type="protein sequence ID" value="ACY56160.1"/>
    <property type="molecule type" value="Genomic_DNA"/>
</dbReference>
<dbReference type="EMBL" id="AF165890">
    <property type="protein sequence ID" value="AAD49850.1"/>
    <property type="status" value="ALT_FRAME"/>
    <property type="molecule type" value="mRNA"/>
</dbReference>
<dbReference type="EMBL" id="AB026295">
    <property type="protein sequence ID" value="BAD67625.1"/>
    <property type="molecule type" value="Genomic_DNA"/>
</dbReference>
<dbReference type="EMBL" id="AP008212">
    <property type="protein sequence ID" value="BAF18795.1"/>
    <property type="molecule type" value="Genomic_DNA"/>
</dbReference>
<dbReference type="EMBL" id="AP014962">
    <property type="protein sequence ID" value="BAS96282.1"/>
    <property type="molecule type" value="Genomic_DNA"/>
</dbReference>
<dbReference type="EMBL" id="AK109458">
    <property type="protein sequence ID" value="BAG98759.1"/>
    <property type="molecule type" value="mRNA"/>
</dbReference>
<dbReference type="PIR" id="JQ2322">
    <property type="entry name" value="JQ2322"/>
</dbReference>
<dbReference type="RefSeq" id="XP_015644241.1">
    <property type="nucleotide sequence ID" value="XM_015788755.1"/>
</dbReference>
<dbReference type="SMR" id="Q0DEC8"/>
<dbReference type="FunCoup" id="Q0DEC8">
    <property type="interactions" value="660"/>
</dbReference>
<dbReference type="STRING" id="39947.Q0DEC8"/>
<dbReference type="CAZy" id="GT5">
    <property type="family name" value="Glycosyltransferase Family 5"/>
</dbReference>
<dbReference type="PaxDb" id="39947-Q0DEC8"/>
<dbReference type="EnsemblPlants" id="Os06t0160700-01">
    <property type="protein sequence ID" value="Os06t0160700-01"/>
    <property type="gene ID" value="Os06g0160700"/>
</dbReference>
<dbReference type="Gramene" id="Os06t0160700-01">
    <property type="protein sequence ID" value="Os06t0160700-01"/>
    <property type="gene ID" value="Os06g0160700"/>
</dbReference>
<dbReference type="eggNOG" id="ENOG502QTWM">
    <property type="taxonomic scope" value="Eukaryota"/>
</dbReference>
<dbReference type="HOGENOM" id="CLU_009583_18_2_1"/>
<dbReference type="InParanoid" id="Q0DEC8"/>
<dbReference type="OMA" id="TWCPWYM"/>
<dbReference type="OrthoDB" id="512920at2759"/>
<dbReference type="PlantReactome" id="R-OSA-1119477">
    <property type="pathway name" value="Starch biosynthesis"/>
</dbReference>
<dbReference type="UniPathway" id="UPA00152"/>
<dbReference type="Proteomes" id="UP000000763">
    <property type="component" value="Chromosome 6"/>
</dbReference>
<dbReference type="Proteomes" id="UP000059680">
    <property type="component" value="Chromosome 6"/>
</dbReference>
<dbReference type="GO" id="GO:0009501">
    <property type="term" value="C:amyloplast"/>
    <property type="evidence" value="ECO:0007669"/>
    <property type="project" value="UniProtKB-SubCell"/>
</dbReference>
<dbReference type="GO" id="GO:0009507">
    <property type="term" value="C:chloroplast"/>
    <property type="evidence" value="ECO:0000318"/>
    <property type="project" value="GO_Central"/>
</dbReference>
<dbReference type="GO" id="GO:0009011">
    <property type="term" value="F:alpha-1,4-glucan glucosyltransferase (ADP-glucose donor) activity"/>
    <property type="evidence" value="ECO:0007669"/>
    <property type="project" value="UniProtKB-EC"/>
</dbReference>
<dbReference type="GO" id="GO:0004373">
    <property type="term" value="F:alpha-1,4-glucan glucosyltransferase (UDP-glucose donor) activity"/>
    <property type="evidence" value="ECO:0007669"/>
    <property type="project" value="InterPro"/>
</dbReference>
<dbReference type="GO" id="GO:0010021">
    <property type="term" value="P:amylopectin biosynthetic process"/>
    <property type="evidence" value="ECO:0000315"/>
    <property type="project" value="UniProtKB"/>
</dbReference>
<dbReference type="GO" id="GO:0009960">
    <property type="term" value="P:endosperm development"/>
    <property type="evidence" value="ECO:0000315"/>
    <property type="project" value="UniProtKB"/>
</dbReference>
<dbReference type="GO" id="GO:0019252">
    <property type="term" value="P:starch biosynthetic process"/>
    <property type="evidence" value="ECO:0000315"/>
    <property type="project" value="UniProtKB"/>
</dbReference>
<dbReference type="CDD" id="cd03791">
    <property type="entry name" value="GT5_Glycogen_synthase_DULL1-like"/>
    <property type="match status" value="1"/>
</dbReference>
<dbReference type="FunFam" id="3.40.50.2000:FF:000048">
    <property type="entry name" value="Starch synthase, chloroplastic/amyloplastic"/>
    <property type="match status" value="1"/>
</dbReference>
<dbReference type="Gene3D" id="3.40.50.2000">
    <property type="entry name" value="Glycogen Phosphorylase B"/>
    <property type="match status" value="2"/>
</dbReference>
<dbReference type="HAMAP" id="MF_00484">
    <property type="entry name" value="Glycogen_synth"/>
    <property type="match status" value="1"/>
</dbReference>
<dbReference type="InterPro" id="IPR001296">
    <property type="entry name" value="Glyco_trans_1"/>
</dbReference>
<dbReference type="InterPro" id="IPR011835">
    <property type="entry name" value="GS/SS"/>
</dbReference>
<dbReference type="InterPro" id="IPR013534">
    <property type="entry name" value="Starch_synth_cat_dom"/>
</dbReference>
<dbReference type="NCBIfam" id="TIGR02095">
    <property type="entry name" value="glgA"/>
    <property type="match status" value="1"/>
</dbReference>
<dbReference type="PANTHER" id="PTHR45825:SF11">
    <property type="entry name" value="ALPHA AMYLASE DOMAIN-CONTAINING PROTEIN"/>
    <property type="match status" value="1"/>
</dbReference>
<dbReference type="PANTHER" id="PTHR45825">
    <property type="entry name" value="GRANULE-BOUND STARCH SYNTHASE 1, CHLOROPLASTIC/AMYLOPLASTIC"/>
    <property type="match status" value="1"/>
</dbReference>
<dbReference type="Pfam" id="PF08323">
    <property type="entry name" value="Glyco_transf_5"/>
    <property type="match status" value="1"/>
</dbReference>
<dbReference type="Pfam" id="PF00534">
    <property type="entry name" value="Glycos_transf_1"/>
    <property type="match status" value="1"/>
</dbReference>
<dbReference type="SUPFAM" id="SSF53756">
    <property type="entry name" value="UDP-Glycosyltransferase/glycogen phosphorylase"/>
    <property type="match status" value="1"/>
</dbReference>
<name>SSY1_ORYSJ</name>
<evidence type="ECO:0000250" key="1"/>
<evidence type="ECO:0000256" key="2">
    <source>
        <dbReference type="SAM" id="MobiDB-lite"/>
    </source>
</evidence>
<evidence type="ECO:0000269" key="3">
    <source>
    </source>
</evidence>
<evidence type="ECO:0000269" key="4">
    <source>
    </source>
</evidence>
<evidence type="ECO:0000269" key="5">
    <source>
    </source>
</evidence>
<evidence type="ECO:0000269" key="6">
    <source>
    </source>
</evidence>
<evidence type="ECO:0000303" key="7">
    <source>
    </source>
</evidence>
<evidence type="ECO:0000303" key="8">
    <source>
    </source>
</evidence>
<evidence type="ECO:0000305" key="9"/>
<evidence type="ECO:0000312" key="10">
    <source>
        <dbReference type="EMBL" id="BAD67625.1"/>
    </source>
</evidence>
<evidence type="ECO:0000312" key="11">
    <source>
        <dbReference type="EMBL" id="BAS96282.1"/>
    </source>
</evidence>